<organism>
    <name type="scientific">Ralstonia nicotianae (strain ATCC BAA-1114 / GMI1000)</name>
    <name type="common">Ralstonia solanacearum</name>
    <dbReference type="NCBI Taxonomy" id="267608"/>
    <lineage>
        <taxon>Bacteria</taxon>
        <taxon>Pseudomonadati</taxon>
        <taxon>Pseudomonadota</taxon>
        <taxon>Betaproteobacteria</taxon>
        <taxon>Burkholderiales</taxon>
        <taxon>Burkholderiaceae</taxon>
        <taxon>Ralstonia</taxon>
        <taxon>Ralstonia solanacearum species complex</taxon>
    </lineage>
</organism>
<proteinExistence type="inferred from homology"/>
<sequence length="884" mass="96739">MKASDIRQKFLTFFETKGHTVVRSSPLVPGNDPTLLFTNSGMVQFKDVFLGTDKRPYVRAASVQRCLRAGGKHNDLENVGYTARHHTFFEMLGNWSFGDYFKRDALVWAWELLTQEYKLPADKLWATVYQTDDEAYDIWTKVIGLPPERVVRIGDNKGAPYASDNFWQMAETGPCGPCSEIFYDHGPEIWGGPPGSPEADGDRYIEIWNNVFMQFDRQLDPQTGEYTLTPLPAPCVDTGMGMERLAAILQHVHSNYEIDLFQALVSAAARETNTKDLANNSLRVIADHIRACAFLIVDGVIPGNEGRGYVLRRIIRRAIRHGYKLGCRAAFFHKLVDDLVKEMGEAYPELREARDRVVDVLRTEEARFFETIEHGMSILDGALGELKAAGKDEKQRMLDGELAFKLHDTYGFPLDLTQDVCRENDVIVDEAAFDAAMNRQREQARAAGKFKMAAGTLDYTGDKTTFHGYDQLLSETSRVTALFVDGASVPEMRPGQTGVVVLDHTPFYAESGGQVGDQGTLKAATVWFDVADTQKVLPEVFGHQGTLRTGVLKVGDAVGAEVDAVRRARTMRNHSATHLMHKALREVLGAHVQQKGSLVDADKTRFDFSHNTPMTPLQIREVEARVNAEILANASTNAQMMGFDDAVKSGAMALFGEKYGDEVRVLTIGSSKELCGGTHVARTGDIGLFKIVGESGVAAGIRRVEAITGDNVLHYLQTLDTRIGEAAAALRAQPSELTQRIVQVQDQVKSLEKELERLKSKLAASQGDELVSQAVDVAGIKVLAAKLDGADAKTLRETMDKLKDKLKTAAIVLGSVSDGKVALIAGVTADATARIKAGELVNFVAQQVGGKGGGRPDMAQAGGTEPDKLPQALAGVTAWVQQKV</sequence>
<reference key="1">
    <citation type="journal article" date="2002" name="Nature">
        <title>Genome sequence of the plant pathogen Ralstonia solanacearum.</title>
        <authorList>
            <person name="Salanoubat M."/>
            <person name="Genin S."/>
            <person name="Artiguenave F."/>
            <person name="Gouzy J."/>
            <person name="Mangenot S."/>
            <person name="Arlat M."/>
            <person name="Billault A."/>
            <person name="Brottier P."/>
            <person name="Camus J.-C."/>
            <person name="Cattolico L."/>
            <person name="Chandler M."/>
            <person name="Choisne N."/>
            <person name="Claudel-Renard C."/>
            <person name="Cunnac S."/>
            <person name="Demange N."/>
            <person name="Gaspin C."/>
            <person name="Lavie M."/>
            <person name="Moisan A."/>
            <person name="Robert C."/>
            <person name="Saurin W."/>
            <person name="Schiex T."/>
            <person name="Siguier P."/>
            <person name="Thebault P."/>
            <person name="Whalen M."/>
            <person name="Wincker P."/>
            <person name="Levy M."/>
            <person name="Weissenbach J."/>
            <person name="Boucher C.A."/>
        </authorList>
    </citation>
    <scope>NUCLEOTIDE SEQUENCE [LARGE SCALE GENOMIC DNA]</scope>
    <source>
        <strain>ATCC BAA-1114 / GMI1000</strain>
    </source>
</reference>
<feature type="chain" id="PRO_0000075184" description="Alanine--tRNA ligase">
    <location>
        <begin position="1"/>
        <end position="884"/>
    </location>
</feature>
<feature type="binding site" evidence="1">
    <location>
        <position position="574"/>
    </location>
    <ligand>
        <name>Zn(2+)</name>
        <dbReference type="ChEBI" id="CHEBI:29105"/>
    </ligand>
</feature>
<feature type="binding site" evidence="1">
    <location>
        <position position="578"/>
    </location>
    <ligand>
        <name>Zn(2+)</name>
        <dbReference type="ChEBI" id="CHEBI:29105"/>
    </ligand>
</feature>
<feature type="binding site" evidence="1">
    <location>
        <position position="675"/>
    </location>
    <ligand>
        <name>Zn(2+)</name>
        <dbReference type="ChEBI" id="CHEBI:29105"/>
    </ligand>
</feature>
<feature type="binding site" evidence="1">
    <location>
        <position position="679"/>
    </location>
    <ligand>
        <name>Zn(2+)</name>
        <dbReference type="ChEBI" id="CHEBI:29105"/>
    </ligand>
</feature>
<accession>Q8Y193</accession>
<keyword id="KW-0030">Aminoacyl-tRNA synthetase</keyword>
<keyword id="KW-0067">ATP-binding</keyword>
<keyword id="KW-0963">Cytoplasm</keyword>
<keyword id="KW-0436">Ligase</keyword>
<keyword id="KW-0479">Metal-binding</keyword>
<keyword id="KW-0547">Nucleotide-binding</keyword>
<keyword id="KW-0648">Protein biosynthesis</keyword>
<keyword id="KW-1185">Reference proteome</keyword>
<keyword id="KW-0694">RNA-binding</keyword>
<keyword id="KW-0820">tRNA-binding</keyword>
<keyword id="KW-0862">Zinc</keyword>
<evidence type="ECO:0000255" key="1">
    <source>
        <dbReference type="HAMAP-Rule" id="MF_00036"/>
    </source>
</evidence>
<name>SYA_RALN1</name>
<dbReference type="EC" id="6.1.1.7" evidence="1"/>
<dbReference type="EMBL" id="AL646052">
    <property type="protein sequence ID" value="CAD14499.1"/>
    <property type="molecule type" value="Genomic_DNA"/>
</dbReference>
<dbReference type="RefSeq" id="WP_011000751.1">
    <property type="nucleotide sequence ID" value="NC_003295.1"/>
</dbReference>
<dbReference type="SMR" id="Q8Y193"/>
<dbReference type="STRING" id="267608.RSc0797"/>
<dbReference type="EnsemblBacteria" id="CAD14499">
    <property type="protein sequence ID" value="CAD14499"/>
    <property type="gene ID" value="RSc0797"/>
</dbReference>
<dbReference type="KEGG" id="rso:RSc0797"/>
<dbReference type="PATRIC" id="fig|267608.8.peg.830"/>
<dbReference type="eggNOG" id="COG0013">
    <property type="taxonomic scope" value="Bacteria"/>
</dbReference>
<dbReference type="HOGENOM" id="CLU_004485_1_1_4"/>
<dbReference type="Proteomes" id="UP000001436">
    <property type="component" value="Chromosome"/>
</dbReference>
<dbReference type="GO" id="GO:0005829">
    <property type="term" value="C:cytosol"/>
    <property type="evidence" value="ECO:0007669"/>
    <property type="project" value="TreeGrafter"/>
</dbReference>
<dbReference type="GO" id="GO:0004813">
    <property type="term" value="F:alanine-tRNA ligase activity"/>
    <property type="evidence" value="ECO:0007669"/>
    <property type="project" value="UniProtKB-UniRule"/>
</dbReference>
<dbReference type="GO" id="GO:0002161">
    <property type="term" value="F:aminoacyl-tRNA deacylase activity"/>
    <property type="evidence" value="ECO:0007669"/>
    <property type="project" value="TreeGrafter"/>
</dbReference>
<dbReference type="GO" id="GO:0005524">
    <property type="term" value="F:ATP binding"/>
    <property type="evidence" value="ECO:0007669"/>
    <property type="project" value="UniProtKB-UniRule"/>
</dbReference>
<dbReference type="GO" id="GO:0000049">
    <property type="term" value="F:tRNA binding"/>
    <property type="evidence" value="ECO:0007669"/>
    <property type="project" value="UniProtKB-KW"/>
</dbReference>
<dbReference type="GO" id="GO:0008270">
    <property type="term" value="F:zinc ion binding"/>
    <property type="evidence" value="ECO:0007669"/>
    <property type="project" value="UniProtKB-UniRule"/>
</dbReference>
<dbReference type="GO" id="GO:0006419">
    <property type="term" value="P:alanyl-tRNA aminoacylation"/>
    <property type="evidence" value="ECO:0007669"/>
    <property type="project" value="UniProtKB-UniRule"/>
</dbReference>
<dbReference type="GO" id="GO:0045892">
    <property type="term" value="P:negative regulation of DNA-templated transcription"/>
    <property type="evidence" value="ECO:0007669"/>
    <property type="project" value="TreeGrafter"/>
</dbReference>
<dbReference type="CDD" id="cd00673">
    <property type="entry name" value="AlaRS_core"/>
    <property type="match status" value="1"/>
</dbReference>
<dbReference type="FunFam" id="2.40.30.130:FF:000001">
    <property type="entry name" value="Alanine--tRNA ligase"/>
    <property type="match status" value="1"/>
</dbReference>
<dbReference type="FunFam" id="3.10.310.40:FF:000001">
    <property type="entry name" value="Alanine--tRNA ligase"/>
    <property type="match status" value="1"/>
</dbReference>
<dbReference type="FunFam" id="3.30.54.20:FF:000001">
    <property type="entry name" value="Alanine--tRNA ligase"/>
    <property type="match status" value="1"/>
</dbReference>
<dbReference type="FunFam" id="3.30.930.10:FF:000004">
    <property type="entry name" value="Alanine--tRNA ligase"/>
    <property type="match status" value="1"/>
</dbReference>
<dbReference type="FunFam" id="3.30.980.10:FF:000004">
    <property type="entry name" value="Alanine--tRNA ligase, cytoplasmic"/>
    <property type="match status" value="1"/>
</dbReference>
<dbReference type="Gene3D" id="2.40.30.130">
    <property type="match status" value="1"/>
</dbReference>
<dbReference type="Gene3D" id="3.10.310.40">
    <property type="match status" value="1"/>
</dbReference>
<dbReference type="Gene3D" id="3.30.54.20">
    <property type="match status" value="1"/>
</dbReference>
<dbReference type="Gene3D" id="6.10.250.550">
    <property type="match status" value="1"/>
</dbReference>
<dbReference type="Gene3D" id="3.30.930.10">
    <property type="entry name" value="Bira Bifunctional Protein, Domain 2"/>
    <property type="match status" value="1"/>
</dbReference>
<dbReference type="Gene3D" id="3.30.980.10">
    <property type="entry name" value="Threonyl-trna Synthetase, Chain A, domain 2"/>
    <property type="match status" value="1"/>
</dbReference>
<dbReference type="HAMAP" id="MF_00036_B">
    <property type="entry name" value="Ala_tRNA_synth_B"/>
    <property type="match status" value="1"/>
</dbReference>
<dbReference type="InterPro" id="IPR045864">
    <property type="entry name" value="aa-tRNA-synth_II/BPL/LPL"/>
</dbReference>
<dbReference type="InterPro" id="IPR002318">
    <property type="entry name" value="Ala-tRNA-lgiase_IIc"/>
</dbReference>
<dbReference type="InterPro" id="IPR018162">
    <property type="entry name" value="Ala-tRNA-ligase_IIc_anticod-bd"/>
</dbReference>
<dbReference type="InterPro" id="IPR018165">
    <property type="entry name" value="Ala-tRNA-synth_IIc_core"/>
</dbReference>
<dbReference type="InterPro" id="IPR018164">
    <property type="entry name" value="Ala-tRNA-synth_IIc_N"/>
</dbReference>
<dbReference type="InterPro" id="IPR050058">
    <property type="entry name" value="Ala-tRNA_ligase"/>
</dbReference>
<dbReference type="InterPro" id="IPR023033">
    <property type="entry name" value="Ala_tRNA_ligase_euk/bac"/>
</dbReference>
<dbReference type="InterPro" id="IPR003156">
    <property type="entry name" value="DHHA1_dom"/>
</dbReference>
<dbReference type="InterPro" id="IPR018163">
    <property type="entry name" value="Thr/Ala-tRNA-synth_IIc_edit"/>
</dbReference>
<dbReference type="InterPro" id="IPR009000">
    <property type="entry name" value="Transl_B-barrel_sf"/>
</dbReference>
<dbReference type="InterPro" id="IPR012947">
    <property type="entry name" value="tRNA_SAD"/>
</dbReference>
<dbReference type="NCBIfam" id="TIGR00344">
    <property type="entry name" value="alaS"/>
    <property type="match status" value="1"/>
</dbReference>
<dbReference type="PANTHER" id="PTHR11777:SF9">
    <property type="entry name" value="ALANINE--TRNA LIGASE, CYTOPLASMIC"/>
    <property type="match status" value="1"/>
</dbReference>
<dbReference type="PANTHER" id="PTHR11777">
    <property type="entry name" value="ALANYL-TRNA SYNTHETASE"/>
    <property type="match status" value="1"/>
</dbReference>
<dbReference type="Pfam" id="PF02272">
    <property type="entry name" value="DHHA1"/>
    <property type="match status" value="1"/>
</dbReference>
<dbReference type="Pfam" id="PF01411">
    <property type="entry name" value="tRNA-synt_2c"/>
    <property type="match status" value="1"/>
</dbReference>
<dbReference type="Pfam" id="PF07973">
    <property type="entry name" value="tRNA_SAD"/>
    <property type="match status" value="1"/>
</dbReference>
<dbReference type="PRINTS" id="PR00980">
    <property type="entry name" value="TRNASYNTHALA"/>
</dbReference>
<dbReference type="SMART" id="SM00863">
    <property type="entry name" value="tRNA_SAD"/>
    <property type="match status" value="1"/>
</dbReference>
<dbReference type="SUPFAM" id="SSF55681">
    <property type="entry name" value="Class II aaRS and biotin synthetases"/>
    <property type="match status" value="1"/>
</dbReference>
<dbReference type="SUPFAM" id="SSF101353">
    <property type="entry name" value="Putative anticodon-binding domain of alanyl-tRNA synthetase (AlaRS)"/>
    <property type="match status" value="1"/>
</dbReference>
<dbReference type="SUPFAM" id="SSF55186">
    <property type="entry name" value="ThrRS/AlaRS common domain"/>
    <property type="match status" value="1"/>
</dbReference>
<dbReference type="SUPFAM" id="SSF50447">
    <property type="entry name" value="Translation proteins"/>
    <property type="match status" value="1"/>
</dbReference>
<dbReference type="PROSITE" id="PS50860">
    <property type="entry name" value="AA_TRNA_LIGASE_II_ALA"/>
    <property type="match status" value="1"/>
</dbReference>
<comment type="function">
    <text evidence="1">Catalyzes the attachment of alanine to tRNA(Ala) in a two-step reaction: alanine is first activated by ATP to form Ala-AMP and then transferred to the acceptor end of tRNA(Ala). Also edits incorrectly charged Ser-tRNA(Ala) and Gly-tRNA(Ala) via its editing domain.</text>
</comment>
<comment type="catalytic activity">
    <reaction evidence="1">
        <text>tRNA(Ala) + L-alanine + ATP = L-alanyl-tRNA(Ala) + AMP + diphosphate</text>
        <dbReference type="Rhea" id="RHEA:12540"/>
        <dbReference type="Rhea" id="RHEA-COMP:9657"/>
        <dbReference type="Rhea" id="RHEA-COMP:9923"/>
        <dbReference type="ChEBI" id="CHEBI:30616"/>
        <dbReference type="ChEBI" id="CHEBI:33019"/>
        <dbReference type="ChEBI" id="CHEBI:57972"/>
        <dbReference type="ChEBI" id="CHEBI:78442"/>
        <dbReference type="ChEBI" id="CHEBI:78497"/>
        <dbReference type="ChEBI" id="CHEBI:456215"/>
        <dbReference type="EC" id="6.1.1.7"/>
    </reaction>
</comment>
<comment type="cofactor">
    <cofactor evidence="1">
        <name>Zn(2+)</name>
        <dbReference type="ChEBI" id="CHEBI:29105"/>
    </cofactor>
    <text evidence="1">Binds 1 zinc ion per subunit.</text>
</comment>
<comment type="subcellular location">
    <subcellularLocation>
        <location evidence="1">Cytoplasm</location>
    </subcellularLocation>
</comment>
<comment type="domain">
    <text evidence="1">Consists of three domains; the N-terminal catalytic domain, the editing domain and the C-terminal C-Ala domain. The editing domain removes incorrectly charged amino acids, while the C-Ala domain, along with tRNA(Ala), serves as a bridge to cooperatively bring together the editing and aminoacylation centers thus stimulating deacylation of misacylated tRNAs.</text>
</comment>
<comment type="similarity">
    <text evidence="1">Belongs to the class-II aminoacyl-tRNA synthetase family.</text>
</comment>
<gene>
    <name evidence="1" type="primary">alaS</name>
    <name type="ordered locus">RSc0797</name>
    <name type="ORF">RS05040</name>
</gene>
<protein>
    <recommendedName>
        <fullName evidence="1">Alanine--tRNA ligase</fullName>
        <ecNumber evidence="1">6.1.1.7</ecNumber>
    </recommendedName>
    <alternativeName>
        <fullName evidence="1">Alanyl-tRNA synthetase</fullName>
        <shortName evidence="1">AlaRS</shortName>
    </alternativeName>
</protein>